<gene>
    <name type="primary">HDC</name>
</gene>
<dbReference type="EC" id="4.1.1.22"/>
<dbReference type="EMBL" id="X71900">
    <property type="protein sequence ID" value="CAA50719.1"/>
    <property type="molecule type" value="mRNA"/>
</dbReference>
<dbReference type="PIR" id="S39554">
    <property type="entry name" value="S39554"/>
</dbReference>
<dbReference type="RefSeq" id="NP_001234136.2">
    <property type="nucleotide sequence ID" value="NM_001247207.2"/>
</dbReference>
<dbReference type="SMR" id="P54772"/>
<dbReference type="STRING" id="4081.P54772"/>
<dbReference type="PaxDb" id="4081-Solyc08g066250.2.1"/>
<dbReference type="GeneID" id="544085"/>
<dbReference type="KEGG" id="sly:544085"/>
<dbReference type="eggNOG" id="KOG0629">
    <property type="taxonomic scope" value="Eukaryota"/>
</dbReference>
<dbReference type="InParanoid" id="P54772"/>
<dbReference type="OrthoDB" id="2161780at2759"/>
<dbReference type="BRENDA" id="4.1.1.22">
    <property type="organism ID" value="3101"/>
</dbReference>
<dbReference type="Proteomes" id="UP000004994">
    <property type="component" value="Unplaced"/>
</dbReference>
<dbReference type="ExpressionAtlas" id="P54772">
    <property type="expression patterns" value="baseline and differential"/>
</dbReference>
<dbReference type="GO" id="GO:0004398">
    <property type="term" value="F:histidine decarboxylase activity"/>
    <property type="evidence" value="ECO:0007669"/>
    <property type="project" value="UniProtKB-EC"/>
</dbReference>
<dbReference type="GO" id="GO:0030170">
    <property type="term" value="F:pyridoxal phosphate binding"/>
    <property type="evidence" value="ECO:0007669"/>
    <property type="project" value="InterPro"/>
</dbReference>
<dbReference type="GO" id="GO:0019752">
    <property type="term" value="P:carboxylic acid metabolic process"/>
    <property type="evidence" value="ECO:0007669"/>
    <property type="project" value="InterPro"/>
</dbReference>
<dbReference type="Gene3D" id="3.90.1150.10">
    <property type="entry name" value="Aspartate Aminotransferase, domain 1"/>
    <property type="match status" value="1"/>
</dbReference>
<dbReference type="Gene3D" id="3.40.640.10">
    <property type="entry name" value="Type I PLP-dependent aspartate aminotransferase-like (Major domain)"/>
    <property type="match status" value="1"/>
</dbReference>
<dbReference type="InterPro" id="IPR051151">
    <property type="entry name" value="Group_II_Decarboxylase"/>
</dbReference>
<dbReference type="InterPro" id="IPR002129">
    <property type="entry name" value="PyrdxlP-dep_de-COase"/>
</dbReference>
<dbReference type="InterPro" id="IPR015424">
    <property type="entry name" value="PyrdxlP-dep_Trfase"/>
</dbReference>
<dbReference type="InterPro" id="IPR015421">
    <property type="entry name" value="PyrdxlP-dep_Trfase_major"/>
</dbReference>
<dbReference type="InterPro" id="IPR015422">
    <property type="entry name" value="PyrdxlP-dep_Trfase_small"/>
</dbReference>
<dbReference type="InterPro" id="IPR021115">
    <property type="entry name" value="Pyridoxal-P_BS"/>
</dbReference>
<dbReference type="NCBIfam" id="NF002748">
    <property type="entry name" value="PRK02769.1"/>
    <property type="match status" value="1"/>
</dbReference>
<dbReference type="PANTHER" id="PTHR46101">
    <property type="match status" value="1"/>
</dbReference>
<dbReference type="PANTHER" id="PTHR46101:SF9">
    <property type="entry name" value="HISTIDINE DECARBOXYLASE"/>
    <property type="match status" value="1"/>
</dbReference>
<dbReference type="Pfam" id="PF00282">
    <property type="entry name" value="Pyridoxal_deC"/>
    <property type="match status" value="1"/>
</dbReference>
<dbReference type="SUPFAM" id="SSF53383">
    <property type="entry name" value="PLP-dependent transferases"/>
    <property type="match status" value="1"/>
</dbReference>
<dbReference type="PROSITE" id="PS00392">
    <property type="entry name" value="DDC_GAD_HDC_YDC"/>
    <property type="match status" value="1"/>
</dbReference>
<comment type="catalytic activity">
    <reaction>
        <text>L-histidine + H(+) = histamine + CO2</text>
        <dbReference type="Rhea" id="RHEA:20840"/>
        <dbReference type="ChEBI" id="CHEBI:15378"/>
        <dbReference type="ChEBI" id="CHEBI:16526"/>
        <dbReference type="ChEBI" id="CHEBI:57595"/>
        <dbReference type="ChEBI" id="CHEBI:58432"/>
        <dbReference type="EC" id="4.1.1.22"/>
    </reaction>
</comment>
<comment type="cofactor">
    <cofactor>
        <name>pyridoxal 5'-phosphate</name>
        <dbReference type="ChEBI" id="CHEBI:597326"/>
    </cofactor>
</comment>
<comment type="tissue specificity">
    <text>Ripe fruits; not detected in leaves and unripe fruit.</text>
</comment>
<comment type="developmental stage">
    <text>Accumulates during early fruit ripening and then declines.</text>
</comment>
<comment type="similarity">
    <text evidence="2">Belongs to the group II decarboxylase family.</text>
</comment>
<name>DCHS_SOLLC</name>
<reference key="1">
    <citation type="journal article" date="1993" name="Plant Mol. Biol.">
        <title>A histidine decarboxylase-like mRNA is involved in tomato fruit ripening.</title>
        <authorList>
            <person name="Picton S."/>
            <person name="Gray J.E."/>
            <person name="Payton S."/>
            <person name="Barton S.L."/>
            <person name="Lowe A."/>
            <person name="Grierson D."/>
        </authorList>
    </citation>
    <scope>NUCLEOTIDE SEQUENCE [MRNA]</scope>
    <source>
        <strain>cv. Ailsa Craig</strain>
    </source>
</reference>
<accession>P54772</accession>
<feature type="chain" id="PRO_0000146954" description="Histidine decarboxylase">
    <location>
        <begin position="1"/>
        <end position="413"/>
    </location>
</feature>
<feature type="binding site" evidence="1">
    <location>
        <position position="129"/>
    </location>
    <ligand>
        <name>substrate</name>
    </ligand>
</feature>
<feature type="modified residue" description="N6-(pyridoxal phosphate)lysine" evidence="1">
    <location>
        <position position="242"/>
    </location>
</feature>
<evidence type="ECO:0000250" key="1"/>
<evidence type="ECO:0000305" key="2"/>
<protein>
    <recommendedName>
        <fullName>Histidine decarboxylase</fullName>
        <shortName>HDC</shortName>
        <ecNumber>4.1.1.22</ecNumber>
    </recommendedName>
    <alternativeName>
        <fullName>TOM92</fullName>
    </alternativeName>
</protein>
<organism>
    <name type="scientific">Solanum lycopersicum</name>
    <name type="common">Tomato</name>
    <name type="synonym">Lycopersicon esculentum</name>
    <dbReference type="NCBI Taxonomy" id="4081"/>
    <lineage>
        <taxon>Eukaryota</taxon>
        <taxon>Viridiplantae</taxon>
        <taxon>Streptophyta</taxon>
        <taxon>Embryophyta</taxon>
        <taxon>Tracheophyta</taxon>
        <taxon>Spermatophyta</taxon>
        <taxon>Magnoliopsida</taxon>
        <taxon>eudicotyledons</taxon>
        <taxon>Gunneridae</taxon>
        <taxon>Pentapetalae</taxon>
        <taxon>asterids</taxon>
        <taxon>lamiids</taxon>
        <taxon>Solanales</taxon>
        <taxon>Solanaceae</taxon>
        <taxon>Solanoideae</taxon>
        <taxon>Solaneae</taxon>
        <taxon>Solanum</taxon>
        <taxon>Solanum subgen. Lycopersicon</taxon>
    </lineage>
</organism>
<sequence>MESDIKNETSFQELDMILTQYLETLSERKKYHIGYPINMCYEHHATLAPLLQFHLNNCGDPFTQHPTDFHSKDFEVAVLDWFAQLWEIEKDEYWGYITSGGTEGNLHGFWLGRRELLPNGYLYASKDSHYSIFKAARMYRMELQTINTLVNGEIDYEDLQSKLLVNKNKPAIININIGTTFKGAIDDLDFVIQTLENCGYSNDNYYIHCDRALCGLILPFIKHAKKITFKKPIGSISISGHKFLGCPMSCGVQITRRSYVSTLSKIEYINSADATISGSRNGFTPIFLWYCLSKKGHARLQQDSITCIENARYLKDRLLEAGISVMLNDFSITVVFERPCDHKFIRRWNLCCLRGMAHVVIMPGITRETIDSFFKDLMQERNYKWYQDVKALPPCLADDLALNCMCSNKKMHN</sequence>
<proteinExistence type="evidence at transcript level"/>
<keyword id="KW-0210">Decarboxylase</keyword>
<keyword id="KW-0456">Lyase</keyword>
<keyword id="KW-0663">Pyridoxal phosphate</keyword>
<keyword id="KW-1185">Reference proteome</keyword>